<evidence type="ECO:0000250" key="1"/>
<evidence type="ECO:0000305" key="2"/>
<organism>
    <name type="scientific">Trichophyton verrucosum (strain HKI 0517)</name>
    <dbReference type="NCBI Taxonomy" id="663202"/>
    <lineage>
        <taxon>Eukaryota</taxon>
        <taxon>Fungi</taxon>
        <taxon>Dikarya</taxon>
        <taxon>Ascomycota</taxon>
        <taxon>Pezizomycotina</taxon>
        <taxon>Eurotiomycetes</taxon>
        <taxon>Eurotiomycetidae</taxon>
        <taxon>Onygenales</taxon>
        <taxon>Arthrodermataceae</taxon>
        <taxon>Trichophyton</taxon>
    </lineage>
</organism>
<feature type="chain" id="PRO_0000411812" description="Probable Xaa-Pro aminopeptidase P">
    <location>
        <begin position="1"/>
        <end position="698"/>
    </location>
</feature>
<feature type="binding site" evidence="1">
    <location>
        <position position="509"/>
    </location>
    <ligand>
        <name>Mn(2+)</name>
        <dbReference type="ChEBI" id="CHEBI:29035"/>
        <label>2</label>
    </ligand>
</feature>
<feature type="binding site" evidence="1">
    <location>
        <position position="520"/>
    </location>
    <ligand>
        <name>Mn(2+)</name>
        <dbReference type="ChEBI" id="CHEBI:29035"/>
        <label>1</label>
    </ligand>
</feature>
<feature type="binding site" evidence="1">
    <location>
        <position position="520"/>
    </location>
    <ligand>
        <name>Mn(2+)</name>
        <dbReference type="ChEBI" id="CHEBI:29035"/>
        <label>2</label>
    </ligand>
</feature>
<feature type="binding site" evidence="1">
    <location>
        <position position="604"/>
    </location>
    <ligand>
        <name>Mn(2+)</name>
        <dbReference type="ChEBI" id="CHEBI:29035"/>
        <label>1</label>
    </ligand>
</feature>
<feature type="binding site" evidence="1">
    <location>
        <position position="618"/>
    </location>
    <ligand>
        <name>Mn(2+)</name>
        <dbReference type="ChEBI" id="CHEBI:29035"/>
        <label>1</label>
    </ligand>
</feature>
<feature type="binding site" evidence="1">
    <location>
        <position position="618"/>
    </location>
    <ligand>
        <name>Mn(2+)</name>
        <dbReference type="ChEBI" id="CHEBI:29035"/>
        <label>2</label>
    </ligand>
</feature>
<sequence length="698" mass="77470">MTIFRPHLRFLFKPHFLYFQSPAGQSSRPFSTSQILRTALDMPPPPVDTTQRLAKLRELMAQNKVDVYSMQFRYTIKAPLIITVVYSFFFFLLLALKLCLRKTAISQSTLLHVMGVETLIRITAAFISSFTGSAGCAIVSMSKAALSTDGRYFSQAAKQLDSNWTLLKRGVEGVPTWEEWTAEQAENGKVVGVDPSLITAGENLHYTPLTSVVVTNCSYVIADARKLSQTLKTTGGSLVGIDQNLIDAVWGNERPARPANQITVQPVERAGKPFEEKVEDLRKELAAKKRSAMVISTLDEIAWLFNLRGSDIPYNPVFFSYAIVTPSVAELYVDESKLSPEARKHLEGKVVLKPYDSIFQASKVLAESKASASSGSSGKFLLSNKASWSLSLALGGEQNVVEVRSPITDAKAIKNEVELEGFRKCHIRDGAALIEYFAWLENALIKEGAQLDEVDGADKLFEIRKKYDLFVGNSFDTISSTGANGATIHYKPEKSTCAVIDPKAMYLCDSGGQYLDGTTDTTRTLHFGEPTEFQKKAYALVLKGHISIDNAIFPKGTTGYAIDSFARQHLWKEGLDYLHGTGHGVGSFLYAEVPLSASNVLSNEPGYYEDGNFGIRLENLVICKEVQTAHKFGDKPFLGFESITLVPFCQKLLDASLLTEAERKWVNDYHARVWEKTSPFFEKDELTTAWLKRETQPI</sequence>
<comment type="function">
    <text evidence="1">Catalyzes the removal of a penultimate prolyl residue from the N-termini of peptides.</text>
</comment>
<comment type="catalytic activity">
    <reaction>
        <text>Release of any N-terminal amino acid, including proline, that is linked to proline, even from a dipeptide or tripeptide.</text>
        <dbReference type="EC" id="3.4.11.9"/>
    </reaction>
</comment>
<comment type="cofactor">
    <cofactor evidence="1">
        <name>Mn(2+)</name>
        <dbReference type="ChEBI" id="CHEBI:29035"/>
    </cofactor>
    <text evidence="1">Binds 2 manganese ions per subunit.</text>
</comment>
<comment type="similarity">
    <text evidence="2">Belongs to the peptidase M24B family.</text>
</comment>
<comment type="sequence caution" evidence="2">
    <conflict type="erroneous gene model prediction">
        <sequence resource="EMBL-CDS" id="EFE41910"/>
    </conflict>
</comment>
<dbReference type="EC" id="3.4.11.9"/>
<dbReference type="EMBL" id="ACYE01000172">
    <property type="protein sequence ID" value="EFE41910.1"/>
    <property type="status" value="ALT_SEQ"/>
    <property type="molecule type" value="Genomic_DNA"/>
</dbReference>
<dbReference type="RefSeq" id="XP_003022528.1">
    <property type="nucleotide sequence ID" value="XM_003022482.1"/>
</dbReference>
<dbReference type="SMR" id="D4D891"/>
<dbReference type="GeneID" id="9581105"/>
<dbReference type="KEGG" id="tve:TRV_03327"/>
<dbReference type="HOGENOM" id="CLU_011781_2_1_1"/>
<dbReference type="OrthoDB" id="2480at34384"/>
<dbReference type="Proteomes" id="UP000008383">
    <property type="component" value="Unassembled WGS sequence"/>
</dbReference>
<dbReference type="GO" id="GO:0005737">
    <property type="term" value="C:cytoplasm"/>
    <property type="evidence" value="ECO:0007669"/>
    <property type="project" value="UniProtKB-ARBA"/>
</dbReference>
<dbReference type="GO" id="GO:0046872">
    <property type="term" value="F:metal ion binding"/>
    <property type="evidence" value="ECO:0007669"/>
    <property type="project" value="UniProtKB-KW"/>
</dbReference>
<dbReference type="GO" id="GO:0070006">
    <property type="term" value="F:metalloaminopeptidase activity"/>
    <property type="evidence" value="ECO:0007669"/>
    <property type="project" value="InterPro"/>
</dbReference>
<dbReference type="GO" id="GO:0006508">
    <property type="term" value="P:proteolysis"/>
    <property type="evidence" value="ECO:0007669"/>
    <property type="project" value="UniProtKB-KW"/>
</dbReference>
<dbReference type="CDD" id="cd01085">
    <property type="entry name" value="APP"/>
    <property type="match status" value="1"/>
</dbReference>
<dbReference type="FunFam" id="3.40.350.10:FF:000010">
    <property type="entry name" value="Probable Xaa-Pro aminopeptidase P"/>
    <property type="match status" value="1"/>
</dbReference>
<dbReference type="FunFam" id="3.90.230.10:FF:000007">
    <property type="entry name" value="Xaa-Pro aminopeptidase P"/>
    <property type="match status" value="1"/>
</dbReference>
<dbReference type="Gene3D" id="3.90.230.10">
    <property type="entry name" value="Creatinase/methionine aminopeptidase superfamily"/>
    <property type="match status" value="1"/>
</dbReference>
<dbReference type="Gene3D" id="3.40.350.10">
    <property type="entry name" value="Creatinase/prolidase N-terminal domain"/>
    <property type="match status" value="2"/>
</dbReference>
<dbReference type="InterPro" id="IPR029149">
    <property type="entry name" value="Creatin/AminoP/Spt16_N"/>
</dbReference>
<dbReference type="InterPro" id="IPR036005">
    <property type="entry name" value="Creatinase/aminopeptidase-like"/>
</dbReference>
<dbReference type="InterPro" id="IPR000587">
    <property type="entry name" value="Creatinase_N"/>
</dbReference>
<dbReference type="InterPro" id="IPR000994">
    <property type="entry name" value="Pept_M24"/>
</dbReference>
<dbReference type="InterPro" id="IPR033740">
    <property type="entry name" value="Pept_M24B"/>
</dbReference>
<dbReference type="InterPro" id="IPR032416">
    <property type="entry name" value="Peptidase_M24_C"/>
</dbReference>
<dbReference type="InterPro" id="IPR050422">
    <property type="entry name" value="X-Pro_aminopeptidase_P"/>
</dbReference>
<dbReference type="PANTHER" id="PTHR43763">
    <property type="entry name" value="XAA-PRO AMINOPEPTIDASE 1"/>
    <property type="match status" value="1"/>
</dbReference>
<dbReference type="PANTHER" id="PTHR43763:SF6">
    <property type="entry name" value="XAA-PRO AMINOPEPTIDASE 1"/>
    <property type="match status" value="1"/>
</dbReference>
<dbReference type="Pfam" id="PF01321">
    <property type="entry name" value="Creatinase_N"/>
    <property type="match status" value="1"/>
</dbReference>
<dbReference type="Pfam" id="PF16189">
    <property type="entry name" value="Creatinase_N_2"/>
    <property type="match status" value="1"/>
</dbReference>
<dbReference type="Pfam" id="PF00557">
    <property type="entry name" value="Peptidase_M24"/>
    <property type="match status" value="1"/>
</dbReference>
<dbReference type="Pfam" id="PF16188">
    <property type="entry name" value="Peptidase_M24_C"/>
    <property type="match status" value="1"/>
</dbReference>
<dbReference type="SUPFAM" id="SSF55920">
    <property type="entry name" value="Creatinase/aminopeptidase"/>
    <property type="match status" value="1"/>
</dbReference>
<dbReference type="SUPFAM" id="SSF53092">
    <property type="entry name" value="Creatinase/prolidase N-terminal domain"/>
    <property type="match status" value="1"/>
</dbReference>
<proteinExistence type="inferred from homology"/>
<reference key="1">
    <citation type="journal article" date="2011" name="Genome Biol.">
        <title>Comparative and functional genomics provide insights into the pathogenicity of dermatophytic fungi.</title>
        <authorList>
            <person name="Burmester A."/>
            <person name="Shelest E."/>
            <person name="Gloeckner G."/>
            <person name="Heddergott C."/>
            <person name="Schindler S."/>
            <person name="Staib P."/>
            <person name="Heidel A."/>
            <person name="Felder M."/>
            <person name="Petzold A."/>
            <person name="Szafranski K."/>
            <person name="Feuermann M."/>
            <person name="Pedruzzi I."/>
            <person name="Priebe S."/>
            <person name="Groth M."/>
            <person name="Winkler R."/>
            <person name="Li W."/>
            <person name="Kniemeyer O."/>
            <person name="Schroeckh V."/>
            <person name="Hertweck C."/>
            <person name="Hube B."/>
            <person name="White T.C."/>
            <person name="Platzer M."/>
            <person name="Guthke R."/>
            <person name="Heitman J."/>
            <person name="Woestemeyer J."/>
            <person name="Zipfel P.F."/>
            <person name="Monod M."/>
            <person name="Brakhage A.A."/>
        </authorList>
    </citation>
    <scope>NUCLEOTIDE SEQUENCE [LARGE SCALE GENOMIC DNA]</scope>
    <source>
        <strain>HKI 0517</strain>
    </source>
</reference>
<gene>
    <name type="primary">AMPP</name>
    <name type="ORF">TRV_03327</name>
</gene>
<keyword id="KW-0031">Aminopeptidase</keyword>
<keyword id="KW-0378">Hydrolase</keyword>
<keyword id="KW-0464">Manganese</keyword>
<keyword id="KW-0479">Metal-binding</keyword>
<keyword id="KW-0482">Metalloprotease</keyword>
<keyword id="KW-0645">Protease</keyword>
<name>AMPP1_TRIVH</name>
<accession>D4D891</accession>
<protein>
    <recommendedName>
        <fullName>Probable Xaa-Pro aminopeptidase P</fullName>
        <shortName>AMPP</shortName>
        <shortName>Aminopeptidase P</shortName>
        <ecNumber>3.4.11.9</ecNumber>
    </recommendedName>
    <alternativeName>
        <fullName>Aminoacylproline aminopeptidase</fullName>
    </alternativeName>
    <alternativeName>
        <fullName>Prolidase</fullName>
    </alternativeName>
</protein>